<accession>B1IPV5</accession>
<gene>
    <name evidence="1" type="primary">tusC</name>
    <name type="ordered locus">EcolC_0369</name>
</gene>
<reference key="1">
    <citation type="submission" date="2008-02" db="EMBL/GenBank/DDBJ databases">
        <title>Complete sequence of Escherichia coli C str. ATCC 8739.</title>
        <authorList>
            <person name="Copeland A."/>
            <person name="Lucas S."/>
            <person name="Lapidus A."/>
            <person name="Glavina del Rio T."/>
            <person name="Dalin E."/>
            <person name="Tice H."/>
            <person name="Bruce D."/>
            <person name="Goodwin L."/>
            <person name="Pitluck S."/>
            <person name="Kiss H."/>
            <person name="Brettin T."/>
            <person name="Detter J.C."/>
            <person name="Han C."/>
            <person name="Kuske C.R."/>
            <person name="Schmutz J."/>
            <person name="Larimer F."/>
            <person name="Land M."/>
            <person name="Hauser L."/>
            <person name="Kyrpides N."/>
            <person name="Mikhailova N."/>
            <person name="Ingram L."/>
            <person name="Richardson P."/>
        </authorList>
    </citation>
    <scope>NUCLEOTIDE SEQUENCE [LARGE SCALE GENOMIC DNA]</scope>
    <source>
        <strain>ATCC 8739 / DSM 1576 / NBRC 3972 / NCIMB 8545 / WDCM 00012 / Crooks</strain>
    </source>
</reference>
<feature type="chain" id="PRO_1000080231" description="Protein TusC">
    <location>
        <begin position="1"/>
        <end position="119"/>
    </location>
</feature>
<organism>
    <name type="scientific">Escherichia coli (strain ATCC 8739 / DSM 1576 / NBRC 3972 / NCIMB 8545 / WDCM 00012 / Crooks)</name>
    <dbReference type="NCBI Taxonomy" id="481805"/>
    <lineage>
        <taxon>Bacteria</taxon>
        <taxon>Pseudomonadati</taxon>
        <taxon>Pseudomonadota</taxon>
        <taxon>Gammaproteobacteria</taxon>
        <taxon>Enterobacterales</taxon>
        <taxon>Enterobacteriaceae</taxon>
        <taxon>Escherichia</taxon>
    </lineage>
</organism>
<comment type="function">
    <text evidence="1">Part of a sulfur-relay system required for 2-thiolation of 5-methylaminomethyl-2-thiouridine (mnm(5)s(2)U) at tRNA wobble positions.</text>
</comment>
<comment type="subunit">
    <text evidence="1">Heterohexamer, formed by a dimer of trimers. The hexameric TusBCD complex contains 2 copies each of TusB, TusC and TusD. The TusBCD complex interacts with TusE.</text>
</comment>
<comment type="subcellular location">
    <subcellularLocation>
        <location evidence="1">Cytoplasm</location>
    </subcellularLocation>
</comment>
<comment type="similarity">
    <text evidence="1">Belongs to the DsrF/TusC family.</text>
</comment>
<keyword id="KW-0963">Cytoplasm</keyword>
<keyword id="KW-0819">tRNA processing</keyword>
<name>TUSC_ECOLC</name>
<protein>
    <recommendedName>
        <fullName evidence="1">Protein TusC</fullName>
    </recommendedName>
    <alternativeName>
        <fullName evidence="1">tRNA 2-thiouridine synthesizing protein C</fullName>
    </alternativeName>
</protein>
<evidence type="ECO:0000255" key="1">
    <source>
        <dbReference type="HAMAP-Rule" id="MF_00389"/>
    </source>
</evidence>
<dbReference type="EMBL" id="CP000946">
    <property type="protein sequence ID" value="ACA76047.1"/>
    <property type="molecule type" value="Genomic_DNA"/>
</dbReference>
<dbReference type="RefSeq" id="WP_000820714.1">
    <property type="nucleotide sequence ID" value="NZ_MTFT01000001.1"/>
</dbReference>
<dbReference type="SMR" id="B1IPV5"/>
<dbReference type="GeneID" id="93778654"/>
<dbReference type="KEGG" id="ecl:EcolC_0369"/>
<dbReference type="HOGENOM" id="CLU_155943_1_0_6"/>
<dbReference type="GO" id="GO:0005737">
    <property type="term" value="C:cytoplasm"/>
    <property type="evidence" value="ECO:0007669"/>
    <property type="project" value="UniProtKB-SubCell"/>
</dbReference>
<dbReference type="GO" id="GO:0008033">
    <property type="term" value="P:tRNA processing"/>
    <property type="evidence" value="ECO:0007669"/>
    <property type="project" value="UniProtKB-UniRule"/>
</dbReference>
<dbReference type="FunFam" id="3.40.1260.10:FF:000004">
    <property type="entry name" value="Sulfurtransferase TusC"/>
    <property type="match status" value="1"/>
</dbReference>
<dbReference type="Gene3D" id="3.40.1260.10">
    <property type="entry name" value="DsrEFH-like"/>
    <property type="match status" value="1"/>
</dbReference>
<dbReference type="HAMAP" id="MF_00389">
    <property type="entry name" value="Thiourid_synth_C"/>
    <property type="match status" value="1"/>
</dbReference>
<dbReference type="InterPro" id="IPR027396">
    <property type="entry name" value="DsrEFH-like"/>
</dbReference>
<dbReference type="InterPro" id="IPR003787">
    <property type="entry name" value="Sulphur_relay_DsrE/F-like"/>
</dbReference>
<dbReference type="InterPro" id="IPR037450">
    <property type="entry name" value="Sulphur_relay_TusC"/>
</dbReference>
<dbReference type="InterPro" id="IPR017462">
    <property type="entry name" value="Sulphur_relay_TusC/DsrF"/>
</dbReference>
<dbReference type="NCBIfam" id="NF001238">
    <property type="entry name" value="PRK00211.1"/>
    <property type="match status" value="1"/>
</dbReference>
<dbReference type="NCBIfam" id="TIGR03010">
    <property type="entry name" value="sulf_tusC_dsrF"/>
    <property type="match status" value="1"/>
</dbReference>
<dbReference type="PANTHER" id="PTHR38780">
    <property type="entry name" value="PROTEIN TUSC"/>
    <property type="match status" value="1"/>
</dbReference>
<dbReference type="PANTHER" id="PTHR38780:SF1">
    <property type="entry name" value="PROTEIN TUSC"/>
    <property type="match status" value="1"/>
</dbReference>
<dbReference type="Pfam" id="PF02635">
    <property type="entry name" value="DsrE"/>
    <property type="match status" value="1"/>
</dbReference>
<dbReference type="SUPFAM" id="SSF75169">
    <property type="entry name" value="DsrEFH-like"/>
    <property type="match status" value="1"/>
</dbReference>
<sequence length="119" mass="13045">MKRIAFVFSTAPHGTAAGREGLDALLATSALTDDLAVFFIADGVFQLLPGQKPDAVLARDYIATFKLLGLYDIEQCWVCAASLRERGLDPQTPFVVEATPLEADALRRELANYDVILRF</sequence>
<proteinExistence type="inferred from homology"/>